<evidence type="ECO:0000250" key="1"/>
<evidence type="ECO:0000255" key="2">
    <source>
        <dbReference type="PROSITE-ProRule" id="PRU00108"/>
    </source>
</evidence>
<evidence type="ECO:0000256" key="3">
    <source>
        <dbReference type="SAM" id="MobiDB-lite"/>
    </source>
</evidence>
<evidence type="ECO:0000305" key="4"/>
<feature type="chain" id="PRO_0000265993" description="Homeobox protein Hox-C13a">
    <location>
        <begin position="1"/>
        <end position="306"/>
    </location>
</feature>
<feature type="DNA-binding region" description="Homeobox" evidence="2">
    <location>
        <begin position="236"/>
        <end position="295"/>
    </location>
</feature>
<feature type="region of interest" description="Disordered" evidence="3">
    <location>
        <begin position="68"/>
        <end position="90"/>
    </location>
</feature>
<dbReference type="EMBL" id="DQ481667">
    <property type="protein sequence ID" value="ABF22440.1"/>
    <property type="molecule type" value="Genomic_DNA"/>
</dbReference>
<dbReference type="SMR" id="Q1KKV4"/>
<dbReference type="FunCoup" id="Q1KKV4">
    <property type="interactions" value="1053"/>
</dbReference>
<dbReference type="STRING" id="31033.ENSTRUP00000065813"/>
<dbReference type="Ensembl" id="ENSTRUT00000010479.3">
    <property type="protein sequence ID" value="ENSTRUP00000010421.1"/>
    <property type="gene ID" value="ENSTRUG00000004383.3"/>
</dbReference>
<dbReference type="GeneID" id="101079732"/>
<dbReference type="KEGG" id="tru:101079732"/>
<dbReference type="CTD" id="58059"/>
<dbReference type="eggNOG" id="KOG0487">
    <property type="taxonomic scope" value="Eukaryota"/>
</dbReference>
<dbReference type="GeneTree" id="ENSGT00940000161087"/>
<dbReference type="HOGENOM" id="CLU_059940_0_0_1"/>
<dbReference type="InParanoid" id="Q1KKV4"/>
<dbReference type="OrthoDB" id="6159439at2759"/>
<dbReference type="TreeFam" id="TF330813"/>
<dbReference type="Proteomes" id="UP000005226">
    <property type="component" value="Chromosome 3"/>
</dbReference>
<dbReference type="GO" id="GO:0005634">
    <property type="term" value="C:nucleus"/>
    <property type="evidence" value="ECO:0007669"/>
    <property type="project" value="UniProtKB-SubCell"/>
</dbReference>
<dbReference type="GO" id="GO:0003677">
    <property type="term" value="F:DNA binding"/>
    <property type="evidence" value="ECO:0007669"/>
    <property type="project" value="UniProtKB-KW"/>
</dbReference>
<dbReference type="GO" id="GO:0000981">
    <property type="term" value="F:DNA-binding transcription factor activity, RNA polymerase II-specific"/>
    <property type="evidence" value="ECO:0007669"/>
    <property type="project" value="InterPro"/>
</dbReference>
<dbReference type="CDD" id="cd00086">
    <property type="entry name" value="homeodomain"/>
    <property type="match status" value="1"/>
</dbReference>
<dbReference type="FunFam" id="1.10.10.60:FF:000130">
    <property type="entry name" value="Homeobox protein Hox-D12"/>
    <property type="match status" value="1"/>
</dbReference>
<dbReference type="Gene3D" id="1.10.10.60">
    <property type="entry name" value="Homeodomain-like"/>
    <property type="match status" value="1"/>
</dbReference>
<dbReference type="InterPro" id="IPR051003">
    <property type="entry name" value="AP_axis_regulatory_Homeobox"/>
</dbReference>
<dbReference type="InterPro" id="IPR001356">
    <property type="entry name" value="HD"/>
</dbReference>
<dbReference type="InterPro" id="IPR017970">
    <property type="entry name" value="Homeobox_CS"/>
</dbReference>
<dbReference type="InterPro" id="IPR009057">
    <property type="entry name" value="Homeodomain-like_sf"/>
</dbReference>
<dbReference type="InterPro" id="IPR022067">
    <property type="entry name" value="HoxA13_N"/>
</dbReference>
<dbReference type="PANTHER" id="PTHR45804:SF5">
    <property type="entry name" value="HOMEOBOX PROTEIN HOX-C13"/>
    <property type="match status" value="1"/>
</dbReference>
<dbReference type="PANTHER" id="PTHR45804">
    <property type="entry name" value="SEGMENTATION PROTEIN FUSHI TARAZU-LIKE PROTEIN"/>
    <property type="match status" value="1"/>
</dbReference>
<dbReference type="Pfam" id="PF00046">
    <property type="entry name" value="Homeodomain"/>
    <property type="match status" value="1"/>
</dbReference>
<dbReference type="Pfam" id="PF12284">
    <property type="entry name" value="HoxA13_N"/>
    <property type="match status" value="1"/>
</dbReference>
<dbReference type="SMART" id="SM00389">
    <property type="entry name" value="HOX"/>
    <property type="match status" value="1"/>
</dbReference>
<dbReference type="SUPFAM" id="SSF46689">
    <property type="entry name" value="Homeodomain-like"/>
    <property type="match status" value="1"/>
</dbReference>
<dbReference type="PROSITE" id="PS00027">
    <property type="entry name" value="HOMEOBOX_1"/>
    <property type="match status" value="1"/>
</dbReference>
<dbReference type="PROSITE" id="PS50071">
    <property type="entry name" value="HOMEOBOX_2"/>
    <property type="match status" value="1"/>
</dbReference>
<sequence length="306" mass="34596">MTTSLVLHPRWADTLMYVYEKSPNENNQNKSQTMEGLSGNCPATHCRDLMSHPALGRHSGTIATHQGSVYSDISSPDTGRQCPAPQTSSSASLSYGYPFGNPYYGCRLSHSHNVNLQQKPCSYHPAEKYAEPSSALPTEELSSRAKEFAFYPSFASSYQAVPGYLDVSVMPSISGHPEPRHDALIPMEGYQHWALSNGWDGQVYCSKEQTQSTHLWKSPFPDVVPLQPEVSSYRRGRKKRVPYTKLQLKELEKEYAASKFITKDKRRRISAATNLSERQVTIWFQNRRVKEKKFISKSKSSHMHTT</sequence>
<organism>
    <name type="scientific">Takifugu rubripes</name>
    <name type="common">Japanese pufferfish</name>
    <name type="synonym">Fugu rubripes</name>
    <dbReference type="NCBI Taxonomy" id="31033"/>
    <lineage>
        <taxon>Eukaryota</taxon>
        <taxon>Metazoa</taxon>
        <taxon>Chordata</taxon>
        <taxon>Craniata</taxon>
        <taxon>Vertebrata</taxon>
        <taxon>Euteleostomi</taxon>
        <taxon>Actinopterygii</taxon>
        <taxon>Neopterygii</taxon>
        <taxon>Teleostei</taxon>
        <taxon>Neoteleostei</taxon>
        <taxon>Acanthomorphata</taxon>
        <taxon>Eupercaria</taxon>
        <taxon>Tetraodontiformes</taxon>
        <taxon>Tetradontoidea</taxon>
        <taxon>Tetraodontidae</taxon>
        <taxon>Takifugu</taxon>
    </lineage>
</organism>
<keyword id="KW-0217">Developmental protein</keyword>
<keyword id="KW-0238">DNA-binding</keyword>
<keyword id="KW-0371">Homeobox</keyword>
<keyword id="KW-0539">Nucleus</keyword>
<keyword id="KW-1185">Reference proteome</keyword>
<keyword id="KW-0804">Transcription</keyword>
<keyword id="KW-0805">Transcription regulation</keyword>
<reference key="1">
    <citation type="journal article" date="2006" name="Proc. Natl. Acad. Sci. U.S.A.">
        <title>Highly conserved syntenic blocks at the vertebrate Hox loci and conserved regulatory elements within and outside Hox gene clusters.</title>
        <authorList>
            <person name="Lee A.P."/>
            <person name="Koh E.G.L."/>
            <person name="Tay A."/>
            <person name="Brenner S."/>
            <person name="Venkatesh B."/>
        </authorList>
    </citation>
    <scope>NUCLEOTIDE SEQUENCE [GENOMIC DNA]</scope>
</reference>
<gene>
    <name type="primary">hoxc13a</name>
</gene>
<protein>
    <recommendedName>
        <fullName>Homeobox protein Hox-C13a</fullName>
    </recommendedName>
</protein>
<comment type="function">
    <text evidence="1">Sequence-specific transcription factor which is part of a developmental regulatory system that provides cells with specific positional identities on the anterior-posterior axis.</text>
</comment>
<comment type="subcellular location">
    <subcellularLocation>
        <location evidence="2">Nucleus</location>
    </subcellularLocation>
</comment>
<comment type="similarity">
    <text evidence="4">Belongs to the Abd-B homeobox family.</text>
</comment>
<proteinExistence type="inferred from homology"/>
<accession>Q1KKV4</accession>
<name>HXCDA_TAKRU</name>